<organism>
    <name type="scientific">Escherichia coli (strain SE11)</name>
    <dbReference type="NCBI Taxonomy" id="409438"/>
    <lineage>
        <taxon>Bacteria</taxon>
        <taxon>Pseudomonadati</taxon>
        <taxon>Pseudomonadota</taxon>
        <taxon>Gammaproteobacteria</taxon>
        <taxon>Enterobacterales</taxon>
        <taxon>Enterobacteriaceae</taxon>
        <taxon>Escherichia</taxon>
    </lineage>
</organism>
<sequence length="1040" mass="112067">MQVLPPSSTGGPSRLFIMRPVATTLLMVAILLAGIIGYRALPVSALPEVDYPTIQVVTLYPGASPDVMTSAVTAPLERQFGQMSGLKQMSSQSSGGASVITLQFQLTLPLDVAEQEVQAAINAATNLLPSDLPNPPVYSKVNPADPPIMTLAVTSTAMPMTQVEDMVETRVAQKISQISGVGLVTLSGGQRPAVRVKLNAQAIAALGLTSETVRTAITGANVNSAKGSLDGPSRAVTLSANDQMQSAEEYRQLIIAYQNGAPIRLGDVATVEQGAENSWLGAWANKEQAIVMNVQRQPGANIISTADSIRQMLPQLTESLPKSVKVTVLSDRTTNIRASVDDTQFELMMAIALVVMIIYLFLRNIPATIIPGVAVPLSLIGTFAVMVFLDFSINNLTLMALTIATGFVVDDAIVVIENISRYIEKGEKPLAAALKGAGEIGFTIISLTFSLIAVLIPLLFMGDIVGRLFREFAITLAVAILISAVVSLTLTPMMCARMLSQESLRKQNRFSRASEKMFDRIIAAYGRGLAKVLNHPWLTLSVALSTLLLSVLLWVFIPKGFFPVQDNGIIQGTLQAPQSSSFANMAQRQRQVADVILQDPAVQSLTSFVGVDGTNPSLNSARLQINLKPLDERDDRVQKVIARLQTAVDKVPGVDLFLQPTQDLTIDTQVSRTQYQFTLQATSLDALSTWVPQLMEKLQQLPQLSDVSSDWQDKGLVAYVNVDRDSASRLGISMADVDNALYNAFGQRLISTIYTQANQYRVVLEHNTEITPGLAALDTIRLTSSDGGVVPLSSIAKVEQRFAPLSINHLDQFPVTTISFNVPDNYSLGDAVQAIMDTEKTLNLPVDITTQFQGSTLAFQSALGSTVWLIVAAVVAMYIVLGILYESFIHPITILSTLPTAGVGALLALMIAGSELDVIAIIGIILLIGIVKKNAIMMIDFALAAEREQGMSPRDAIYQACLLRFRPILMTTLAALLGALPLMLSTGVGAELRRPLGIGMVGGLIVSQVLTLFTTPVIYLLFDRLALWTKSRFARHEEEA</sequence>
<accession>B6HYS0</accession>
<reference key="1">
    <citation type="journal article" date="2008" name="DNA Res.">
        <title>Complete genome sequence and comparative analysis of the wild-type commensal Escherichia coli strain SE11 isolated from a healthy adult.</title>
        <authorList>
            <person name="Oshima K."/>
            <person name="Toh H."/>
            <person name="Ogura Y."/>
            <person name="Sasamoto H."/>
            <person name="Morita H."/>
            <person name="Park S.-H."/>
            <person name="Ooka T."/>
            <person name="Iyoda S."/>
            <person name="Taylor T.D."/>
            <person name="Hayashi T."/>
            <person name="Itoh K."/>
            <person name="Hattori M."/>
        </authorList>
    </citation>
    <scope>NUCLEOTIDE SEQUENCE [LARGE SCALE GENOMIC DNA]</scope>
    <source>
        <strain>SE11</strain>
    </source>
</reference>
<feature type="chain" id="PRO_1000145653" description="Multidrug resistance protein MdtB">
    <location>
        <begin position="1"/>
        <end position="1040"/>
    </location>
</feature>
<feature type="transmembrane region" description="Helical" evidence="1">
    <location>
        <begin position="16"/>
        <end position="36"/>
    </location>
</feature>
<feature type="transmembrane region" description="Helical" evidence="1">
    <location>
        <begin position="347"/>
        <end position="367"/>
    </location>
</feature>
<feature type="transmembrane region" description="Helical" evidence="1">
    <location>
        <begin position="369"/>
        <end position="389"/>
    </location>
</feature>
<feature type="transmembrane region" description="Helical" evidence="1">
    <location>
        <begin position="396"/>
        <end position="416"/>
    </location>
</feature>
<feature type="transmembrane region" description="Helical" evidence="1">
    <location>
        <begin position="440"/>
        <end position="460"/>
    </location>
</feature>
<feature type="transmembrane region" description="Helical" evidence="1">
    <location>
        <begin position="472"/>
        <end position="492"/>
    </location>
</feature>
<feature type="transmembrane region" description="Helical" evidence="1">
    <location>
        <begin position="537"/>
        <end position="557"/>
    </location>
</feature>
<feature type="transmembrane region" description="Helical" evidence="1">
    <location>
        <begin position="863"/>
        <end position="883"/>
    </location>
</feature>
<feature type="transmembrane region" description="Helical" evidence="1">
    <location>
        <begin position="888"/>
        <end position="908"/>
    </location>
</feature>
<feature type="transmembrane region" description="Helical" evidence="1">
    <location>
        <begin position="911"/>
        <end position="931"/>
    </location>
</feature>
<feature type="transmembrane region" description="Helical" evidence="1">
    <location>
        <begin position="968"/>
        <end position="988"/>
    </location>
</feature>
<feature type="transmembrane region" description="Helical" evidence="1">
    <location>
        <begin position="998"/>
        <end position="1018"/>
    </location>
</feature>
<dbReference type="EMBL" id="AP009240">
    <property type="protein sequence ID" value="BAG77872.1"/>
    <property type="molecule type" value="Genomic_DNA"/>
</dbReference>
<dbReference type="RefSeq" id="WP_001197868.1">
    <property type="nucleotide sequence ID" value="NC_011415.1"/>
</dbReference>
<dbReference type="SMR" id="B6HYS0"/>
<dbReference type="KEGG" id="ecy:ECSE_2348"/>
<dbReference type="HOGENOM" id="CLU_002755_1_2_6"/>
<dbReference type="Proteomes" id="UP000008199">
    <property type="component" value="Chromosome"/>
</dbReference>
<dbReference type="GO" id="GO:0005886">
    <property type="term" value="C:plasma membrane"/>
    <property type="evidence" value="ECO:0007669"/>
    <property type="project" value="UniProtKB-SubCell"/>
</dbReference>
<dbReference type="GO" id="GO:0042910">
    <property type="term" value="F:xenobiotic transmembrane transporter activity"/>
    <property type="evidence" value="ECO:0007669"/>
    <property type="project" value="TreeGrafter"/>
</dbReference>
<dbReference type="FunFam" id="1.20.1640.10:FF:000001">
    <property type="entry name" value="Efflux pump membrane transporter"/>
    <property type="match status" value="1"/>
</dbReference>
<dbReference type="FunFam" id="3.30.70.1430:FF:000001">
    <property type="entry name" value="Efflux pump membrane transporter"/>
    <property type="match status" value="1"/>
</dbReference>
<dbReference type="FunFam" id="3.30.2090.10:FF:000003">
    <property type="entry name" value="Multidrug resistance protein MdtB"/>
    <property type="match status" value="1"/>
</dbReference>
<dbReference type="FunFam" id="3.30.2090.10:FF:000006">
    <property type="entry name" value="Multidrug resistance protein MdtB"/>
    <property type="match status" value="1"/>
</dbReference>
<dbReference type="Gene3D" id="3.30.70.1430">
    <property type="entry name" value="Multidrug efflux transporter AcrB pore domain"/>
    <property type="match status" value="2"/>
</dbReference>
<dbReference type="Gene3D" id="3.30.70.1440">
    <property type="entry name" value="Multidrug efflux transporter AcrB pore domain"/>
    <property type="match status" value="1"/>
</dbReference>
<dbReference type="Gene3D" id="3.30.70.1320">
    <property type="entry name" value="Multidrug efflux transporter AcrB pore domain like"/>
    <property type="match status" value="1"/>
</dbReference>
<dbReference type="Gene3D" id="3.30.2090.10">
    <property type="entry name" value="Multidrug efflux transporter AcrB TolC docking domain, DN and DC subdomains"/>
    <property type="match status" value="2"/>
</dbReference>
<dbReference type="Gene3D" id="1.20.1640.10">
    <property type="entry name" value="Multidrug efflux transporter AcrB transmembrane domain"/>
    <property type="match status" value="2"/>
</dbReference>
<dbReference type="HAMAP" id="MF_01423">
    <property type="entry name" value="MdtB"/>
    <property type="match status" value="1"/>
</dbReference>
<dbReference type="InterPro" id="IPR027463">
    <property type="entry name" value="AcrB_DN_DC_subdom"/>
</dbReference>
<dbReference type="InterPro" id="IPR001036">
    <property type="entry name" value="Acrflvin-R"/>
</dbReference>
<dbReference type="InterPro" id="IPR022831">
    <property type="entry name" value="Multidrug-R_MdtB"/>
</dbReference>
<dbReference type="NCBIfam" id="NF007798">
    <property type="entry name" value="PRK10503.1"/>
    <property type="match status" value="1"/>
</dbReference>
<dbReference type="NCBIfam" id="NF033617">
    <property type="entry name" value="RND_permease_2"/>
    <property type="match status" value="1"/>
</dbReference>
<dbReference type="PANTHER" id="PTHR32063">
    <property type="match status" value="1"/>
</dbReference>
<dbReference type="PANTHER" id="PTHR32063:SF21">
    <property type="entry name" value="MULTIDRUG RESISTANCE PROTEIN MDTB"/>
    <property type="match status" value="1"/>
</dbReference>
<dbReference type="Pfam" id="PF00873">
    <property type="entry name" value="ACR_tran"/>
    <property type="match status" value="1"/>
</dbReference>
<dbReference type="PRINTS" id="PR00702">
    <property type="entry name" value="ACRIFLAVINRP"/>
</dbReference>
<dbReference type="SUPFAM" id="SSF82693">
    <property type="entry name" value="Multidrug efflux transporter AcrB pore domain, PN1, PN2, PC1 and PC2 subdomains"/>
    <property type="match status" value="3"/>
</dbReference>
<dbReference type="SUPFAM" id="SSF82714">
    <property type="entry name" value="Multidrug efflux transporter AcrB TolC docking domain, DN and DC subdomains"/>
    <property type="match status" value="2"/>
</dbReference>
<dbReference type="SUPFAM" id="SSF82866">
    <property type="entry name" value="Multidrug efflux transporter AcrB transmembrane domain"/>
    <property type="match status" value="2"/>
</dbReference>
<name>MDTB_ECOSE</name>
<evidence type="ECO:0000255" key="1">
    <source>
        <dbReference type="HAMAP-Rule" id="MF_01423"/>
    </source>
</evidence>
<proteinExistence type="evidence at transcript level"/>
<comment type="function">
    <text evidence="1">The MdtABC tripartite complex confers resistance against novobiocin and deoxycholate.</text>
</comment>
<comment type="subunit">
    <text evidence="1">Part of a tripartite efflux system composed of MdtA, MdtB and MdtC. MdtB forms a heteromultimer with MdtC.</text>
</comment>
<comment type="subcellular location">
    <subcellularLocation>
        <location evidence="1">Cell inner membrane</location>
        <topology evidence="1">Multi-pass membrane protein</topology>
    </subcellularLocation>
</comment>
<comment type="induction">
    <text>The mdtABC operon is transcriptionally activated by BaeR.</text>
</comment>
<comment type="similarity">
    <text evidence="1">Belongs to the resistance-nodulation-cell division (RND) (TC 2.A.6) family. MdtB subfamily.</text>
</comment>
<gene>
    <name evidence="1" type="primary">mdtB</name>
    <name type="ordered locus">ECSE_2348</name>
</gene>
<keyword id="KW-0997">Cell inner membrane</keyword>
<keyword id="KW-1003">Cell membrane</keyword>
<keyword id="KW-0472">Membrane</keyword>
<keyword id="KW-0812">Transmembrane</keyword>
<keyword id="KW-1133">Transmembrane helix</keyword>
<keyword id="KW-0813">Transport</keyword>
<protein>
    <recommendedName>
        <fullName evidence="1">Multidrug resistance protein MdtB</fullName>
    </recommendedName>
    <alternativeName>
        <fullName evidence="1">Multidrug transporter MdtB</fullName>
    </alternativeName>
</protein>